<organism>
    <name type="scientific">Vigna unguiculata</name>
    <name type="common">Cowpea</name>
    <dbReference type="NCBI Taxonomy" id="3917"/>
    <lineage>
        <taxon>Eukaryota</taxon>
        <taxon>Viridiplantae</taxon>
        <taxon>Streptophyta</taxon>
        <taxon>Embryophyta</taxon>
        <taxon>Tracheophyta</taxon>
        <taxon>Spermatophyta</taxon>
        <taxon>Magnoliopsida</taxon>
        <taxon>eudicotyledons</taxon>
        <taxon>Gunneridae</taxon>
        <taxon>Pentapetalae</taxon>
        <taxon>rosids</taxon>
        <taxon>fabids</taxon>
        <taxon>Fabales</taxon>
        <taxon>Fabaceae</taxon>
        <taxon>Papilionoideae</taxon>
        <taxon>50 kb inversion clade</taxon>
        <taxon>NPAAA clade</taxon>
        <taxon>indigoferoid/millettioid clade</taxon>
        <taxon>Phaseoleae</taxon>
        <taxon>Vigna</taxon>
    </lineage>
</organism>
<proteinExistence type="inferred from homology"/>
<name>RBL_VIGUN</name>
<geneLocation type="chloroplast"/>
<accession>O62964</accession>
<keyword id="KW-0007">Acetylation</keyword>
<keyword id="KW-0113">Calvin cycle</keyword>
<keyword id="KW-0120">Carbon dioxide fixation</keyword>
<keyword id="KW-0150">Chloroplast</keyword>
<keyword id="KW-1015">Disulfide bond</keyword>
<keyword id="KW-0456">Lyase</keyword>
<keyword id="KW-0460">Magnesium</keyword>
<keyword id="KW-0479">Metal-binding</keyword>
<keyword id="KW-0488">Methylation</keyword>
<keyword id="KW-0503">Monooxygenase</keyword>
<keyword id="KW-0560">Oxidoreductase</keyword>
<keyword id="KW-0601">Photorespiration</keyword>
<keyword id="KW-0602">Photosynthesis</keyword>
<keyword id="KW-0934">Plastid</keyword>
<dbReference type="EC" id="4.1.1.39" evidence="1"/>
<dbReference type="EMBL" id="Z95543">
    <property type="protein sequence ID" value="CAB08869.1"/>
    <property type="molecule type" value="Genomic_DNA"/>
</dbReference>
<dbReference type="SMR" id="O62964"/>
<dbReference type="GO" id="GO:0009507">
    <property type="term" value="C:chloroplast"/>
    <property type="evidence" value="ECO:0007669"/>
    <property type="project" value="UniProtKB-SubCell"/>
</dbReference>
<dbReference type="GO" id="GO:0000287">
    <property type="term" value="F:magnesium ion binding"/>
    <property type="evidence" value="ECO:0007669"/>
    <property type="project" value="UniProtKB-UniRule"/>
</dbReference>
<dbReference type="GO" id="GO:0004497">
    <property type="term" value="F:monooxygenase activity"/>
    <property type="evidence" value="ECO:0007669"/>
    <property type="project" value="UniProtKB-KW"/>
</dbReference>
<dbReference type="GO" id="GO:0016984">
    <property type="term" value="F:ribulose-bisphosphate carboxylase activity"/>
    <property type="evidence" value="ECO:0007669"/>
    <property type="project" value="UniProtKB-UniRule"/>
</dbReference>
<dbReference type="GO" id="GO:0009853">
    <property type="term" value="P:photorespiration"/>
    <property type="evidence" value="ECO:0007669"/>
    <property type="project" value="UniProtKB-KW"/>
</dbReference>
<dbReference type="GO" id="GO:0019253">
    <property type="term" value="P:reductive pentose-phosphate cycle"/>
    <property type="evidence" value="ECO:0007669"/>
    <property type="project" value="UniProtKB-UniRule"/>
</dbReference>
<dbReference type="CDD" id="cd08212">
    <property type="entry name" value="RuBisCO_large_I"/>
    <property type="match status" value="1"/>
</dbReference>
<dbReference type="FunFam" id="3.20.20.110:FF:000001">
    <property type="entry name" value="Ribulose bisphosphate carboxylase large chain"/>
    <property type="match status" value="1"/>
</dbReference>
<dbReference type="FunFam" id="3.30.70.150:FF:000001">
    <property type="entry name" value="Ribulose bisphosphate carboxylase large chain"/>
    <property type="match status" value="1"/>
</dbReference>
<dbReference type="Gene3D" id="3.20.20.110">
    <property type="entry name" value="Ribulose bisphosphate carboxylase, large subunit, C-terminal domain"/>
    <property type="match status" value="1"/>
</dbReference>
<dbReference type="Gene3D" id="3.30.70.150">
    <property type="entry name" value="RuBisCO large subunit, N-terminal domain"/>
    <property type="match status" value="1"/>
</dbReference>
<dbReference type="HAMAP" id="MF_01338">
    <property type="entry name" value="RuBisCO_L_type1"/>
    <property type="match status" value="1"/>
</dbReference>
<dbReference type="InterPro" id="IPR033966">
    <property type="entry name" value="RuBisCO"/>
</dbReference>
<dbReference type="InterPro" id="IPR020878">
    <property type="entry name" value="RuBisCo_large_chain_AS"/>
</dbReference>
<dbReference type="InterPro" id="IPR000685">
    <property type="entry name" value="RuBisCO_lsu_C"/>
</dbReference>
<dbReference type="InterPro" id="IPR036376">
    <property type="entry name" value="RuBisCO_lsu_C_sf"/>
</dbReference>
<dbReference type="InterPro" id="IPR017443">
    <property type="entry name" value="RuBisCO_lsu_fd_N"/>
</dbReference>
<dbReference type="InterPro" id="IPR036422">
    <property type="entry name" value="RuBisCO_lsu_N_sf"/>
</dbReference>
<dbReference type="InterPro" id="IPR020888">
    <property type="entry name" value="RuBisCO_lsuI"/>
</dbReference>
<dbReference type="NCBIfam" id="NF003252">
    <property type="entry name" value="PRK04208.1"/>
    <property type="match status" value="1"/>
</dbReference>
<dbReference type="PANTHER" id="PTHR42704">
    <property type="entry name" value="RIBULOSE BISPHOSPHATE CARBOXYLASE"/>
    <property type="match status" value="1"/>
</dbReference>
<dbReference type="PANTHER" id="PTHR42704:SF15">
    <property type="entry name" value="RIBULOSE BISPHOSPHATE CARBOXYLASE LARGE CHAIN"/>
    <property type="match status" value="1"/>
</dbReference>
<dbReference type="Pfam" id="PF00016">
    <property type="entry name" value="RuBisCO_large"/>
    <property type="match status" value="1"/>
</dbReference>
<dbReference type="Pfam" id="PF02788">
    <property type="entry name" value="RuBisCO_large_N"/>
    <property type="match status" value="1"/>
</dbReference>
<dbReference type="SFLD" id="SFLDG01052">
    <property type="entry name" value="RuBisCO"/>
    <property type="match status" value="1"/>
</dbReference>
<dbReference type="SFLD" id="SFLDS00014">
    <property type="entry name" value="RuBisCO"/>
    <property type="match status" value="1"/>
</dbReference>
<dbReference type="SFLD" id="SFLDG00301">
    <property type="entry name" value="RuBisCO-like_proteins"/>
    <property type="match status" value="1"/>
</dbReference>
<dbReference type="SUPFAM" id="SSF51649">
    <property type="entry name" value="RuBisCo, C-terminal domain"/>
    <property type="match status" value="1"/>
</dbReference>
<dbReference type="SUPFAM" id="SSF54966">
    <property type="entry name" value="RuBisCO, large subunit, small (N-terminal) domain"/>
    <property type="match status" value="1"/>
</dbReference>
<dbReference type="PROSITE" id="PS00157">
    <property type="entry name" value="RUBISCO_LARGE"/>
    <property type="match status" value="1"/>
</dbReference>
<comment type="function">
    <text evidence="1">RuBisCO catalyzes two reactions: the carboxylation of D-ribulose 1,5-bisphosphate, the primary event in carbon dioxide fixation, as well as the oxidative fragmentation of the pentose substrate in the photorespiration process. Both reactions occur simultaneously and in competition at the same active site.</text>
</comment>
<comment type="catalytic activity">
    <reaction evidence="1">
        <text>2 (2R)-3-phosphoglycerate + 2 H(+) = D-ribulose 1,5-bisphosphate + CO2 + H2O</text>
        <dbReference type="Rhea" id="RHEA:23124"/>
        <dbReference type="ChEBI" id="CHEBI:15377"/>
        <dbReference type="ChEBI" id="CHEBI:15378"/>
        <dbReference type="ChEBI" id="CHEBI:16526"/>
        <dbReference type="ChEBI" id="CHEBI:57870"/>
        <dbReference type="ChEBI" id="CHEBI:58272"/>
        <dbReference type="EC" id="4.1.1.39"/>
    </reaction>
</comment>
<comment type="catalytic activity">
    <reaction evidence="1">
        <text>D-ribulose 1,5-bisphosphate + O2 = 2-phosphoglycolate + (2R)-3-phosphoglycerate + 2 H(+)</text>
        <dbReference type="Rhea" id="RHEA:36631"/>
        <dbReference type="ChEBI" id="CHEBI:15378"/>
        <dbReference type="ChEBI" id="CHEBI:15379"/>
        <dbReference type="ChEBI" id="CHEBI:57870"/>
        <dbReference type="ChEBI" id="CHEBI:58033"/>
        <dbReference type="ChEBI" id="CHEBI:58272"/>
    </reaction>
</comment>
<comment type="cofactor">
    <cofactor evidence="1">
        <name>Mg(2+)</name>
        <dbReference type="ChEBI" id="CHEBI:18420"/>
    </cofactor>
    <text evidence="1">Binds 1 Mg(2+) ion per subunit.</text>
</comment>
<comment type="subunit">
    <text evidence="1">Heterohexadecamer of 8 large chains and 8 small chains; disulfide-linked. The disulfide link is formed within the large subunit homodimers.</text>
</comment>
<comment type="subcellular location">
    <subcellularLocation>
        <location>Plastid</location>
        <location>Chloroplast</location>
    </subcellularLocation>
</comment>
<comment type="PTM">
    <text evidence="1">The disulfide bond which can form in the large chain dimeric partners within the hexadecamer appears to be associated with oxidative stress and protein turnover.</text>
</comment>
<comment type="miscellaneous">
    <text evidence="1">The basic functional RuBisCO is composed of a large chain homodimer in a 'head-to-tail' conformation. In form I RuBisCO this homodimer is arranged in a barrel-like tetramer with the small subunits forming a tetrameric 'cap' on each end of the 'barrel'.</text>
</comment>
<comment type="similarity">
    <text evidence="1">Belongs to the RuBisCO large chain family. Type I subfamily.</text>
</comment>
<protein>
    <recommendedName>
        <fullName evidence="1">Ribulose bisphosphate carboxylase large chain</fullName>
        <shortName evidence="1">RuBisCO large subunit</shortName>
        <ecNumber evidence="1">4.1.1.39</ecNumber>
    </recommendedName>
</protein>
<reference key="1">
    <citation type="submission" date="1997-05" db="EMBL/GenBank/DDBJ databases">
        <authorList>
            <person name="Kaess E."/>
            <person name="Wink M."/>
        </authorList>
    </citation>
    <scope>NUCLEOTIDE SEQUENCE [GENOMIC DNA]</scope>
    <source>
        <tissue>Leaf</tissue>
    </source>
</reference>
<feature type="propeptide" id="PRO_0000031439" evidence="1">
    <location>
        <begin position="1"/>
        <end position="2"/>
    </location>
</feature>
<feature type="chain" id="PRO_0000031440" description="Ribulose bisphosphate carboxylase large chain">
    <location>
        <begin position="3"/>
        <end position="473"/>
    </location>
</feature>
<feature type="active site" description="Proton acceptor" evidence="1">
    <location>
        <position position="175"/>
    </location>
</feature>
<feature type="active site" description="Proton acceptor" evidence="1">
    <location>
        <position position="294"/>
    </location>
</feature>
<feature type="binding site" description="in homodimeric partner" evidence="1">
    <location>
        <position position="123"/>
    </location>
    <ligand>
        <name>substrate</name>
    </ligand>
</feature>
<feature type="binding site" evidence="1">
    <location>
        <position position="173"/>
    </location>
    <ligand>
        <name>substrate</name>
    </ligand>
</feature>
<feature type="binding site" evidence="1">
    <location>
        <position position="177"/>
    </location>
    <ligand>
        <name>substrate</name>
    </ligand>
</feature>
<feature type="binding site" description="via carbamate group" evidence="1">
    <location>
        <position position="201"/>
    </location>
    <ligand>
        <name>Mg(2+)</name>
        <dbReference type="ChEBI" id="CHEBI:18420"/>
    </ligand>
</feature>
<feature type="binding site" evidence="1">
    <location>
        <position position="203"/>
    </location>
    <ligand>
        <name>Mg(2+)</name>
        <dbReference type="ChEBI" id="CHEBI:18420"/>
    </ligand>
</feature>
<feature type="binding site" evidence="1">
    <location>
        <position position="204"/>
    </location>
    <ligand>
        <name>Mg(2+)</name>
        <dbReference type="ChEBI" id="CHEBI:18420"/>
    </ligand>
</feature>
<feature type="binding site" evidence="1">
    <location>
        <position position="295"/>
    </location>
    <ligand>
        <name>substrate</name>
    </ligand>
</feature>
<feature type="binding site" evidence="1">
    <location>
        <position position="327"/>
    </location>
    <ligand>
        <name>substrate</name>
    </ligand>
</feature>
<feature type="binding site" evidence="1">
    <location>
        <position position="379"/>
    </location>
    <ligand>
        <name>substrate</name>
    </ligand>
</feature>
<feature type="site" description="Transition state stabilizer" evidence="1">
    <location>
        <position position="334"/>
    </location>
</feature>
<feature type="modified residue" description="N-acetylproline" evidence="1">
    <location>
        <position position="3"/>
    </location>
</feature>
<feature type="modified residue" description="N6,N6,N6-trimethyllysine" evidence="1">
    <location>
        <position position="14"/>
    </location>
</feature>
<feature type="modified residue" description="N6-carboxylysine" evidence="1">
    <location>
        <position position="201"/>
    </location>
</feature>
<feature type="disulfide bond" description="Interchain; in linked form" evidence="1">
    <location>
        <position position="247"/>
    </location>
</feature>
<gene>
    <name evidence="1" type="primary">rbcL</name>
</gene>
<evidence type="ECO:0000255" key="1">
    <source>
        <dbReference type="HAMAP-Rule" id="MF_01338"/>
    </source>
</evidence>
<sequence length="473" mass="52502">MSPQTETKASVGFKAGVKDYKLNYYTPEYETKDTDILAAFRVTPQPGVPPEEAGASVAAESSTGTWTTVWTDGLTSLDRYKGRCYHIEPVAGEENQYIAYVAYPLDLFEEGSVTNMFTSIVGNVFGFKALRALRLEDLRIPNAYIKTFQGPPHGIQVERDKLNKYGRPLLGCTIKPKLGLSAKNYGRAVYECLRGGLDFTKDDENVNSQPFMRWRDRFLFCAEAIFKSQAETGEIKGHYLNATAGTCEEMMKRAVFARELGVPIVMHDYLTGGFTANTSLAHYCRDNGLLLHIHRAMHAVIDRQKNHGMHFRVLAKALRLSGGDHVHSGTVVGKLEGERDITLGFVDLLRDDFVEKDRSRGIYFTQDWVSLPGVLPVASGGIHVWHMPALTEIFGDDSVLQFGGGTLGHPWGNAPGAVANRVALEACVKARNEGRDLAREGNEIIREASKWSPELAAACEVWKEIKFEFPAMD</sequence>